<evidence type="ECO:0000255" key="1">
    <source>
        <dbReference type="HAMAP-Rule" id="MF_00822"/>
    </source>
</evidence>
<gene>
    <name evidence="1" type="primary">ureE</name>
    <name type="ordered locus">PSPA7_5614</name>
</gene>
<feature type="chain" id="PRO_1000062554" description="Urease accessory protein UreE">
    <location>
        <begin position="1"/>
        <end position="167"/>
    </location>
</feature>
<reference key="1">
    <citation type="submission" date="2007-06" db="EMBL/GenBank/DDBJ databases">
        <authorList>
            <person name="Dodson R.J."/>
            <person name="Harkins D."/>
            <person name="Paulsen I.T."/>
        </authorList>
    </citation>
    <scope>NUCLEOTIDE SEQUENCE [LARGE SCALE GENOMIC DNA]</scope>
    <source>
        <strain>DSM 24068 / PA7</strain>
    </source>
</reference>
<protein>
    <recommendedName>
        <fullName evidence="1">Urease accessory protein UreE</fullName>
    </recommendedName>
</protein>
<comment type="function">
    <text evidence="1">Involved in urease metallocenter assembly. Binds nickel. Probably functions as a nickel donor during metallocenter assembly.</text>
</comment>
<comment type="subcellular location">
    <subcellularLocation>
        <location evidence="1">Cytoplasm</location>
    </subcellularLocation>
</comment>
<comment type="similarity">
    <text evidence="1">Belongs to the UreE family.</text>
</comment>
<sequence>MLVIHQRLPARSPRWDEELHLTYEARSKSRLRCFAASGEEVGLFLERGLPPLADGDCLEARDGRVVRVFARAEELLHVTCASPLELTRAAYHLGNRHVALQVGEGWLRLLDDYVLKAMLEQLGASVNAIQAPFQPEHGAYGGGHHHSHHGEAEFNYAPRLHQFGVRR</sequence>
<name>UREE_PSEP7</name>
<keyword id="KW-0143">Chaperone</keyword>
<keyword id="KW-0963">Cytoplasm</keyword>
<keyword id="KW-0533">Nickel</keyword>
<keyword id="KW-0996">Nickel insertion</keyword>
<dbReference type="EMBL" id="CP000744">
    <property type="protein sequence ID" value="ABR85566.1"/>
    <property type="molecule type" value="Genomic_DNA"/>
</dbReference>
<dbReference type="RefSeq" id="WP_012077594.1">
    <property type="nucleotide sequence ID" value="NC_009656.1"/>
</dbReference>
<dbReference type="SMR" id="A6VD00"/>
<dbReference type="KEGG" id="pap:PSPA7_5614"/>
<dbReference type="HOGENOM" id="CLU_093757_2_0_6"/>
<dbReference type="Proteomes" id="UP000001582">
    <property type="component" value="Chromosome"/>
</dbReference>
<dbReference type="GO" id="GO:0005737">
    <property type="term" value="C:cytoplasm"/>
    <property type="evidence" value="ECO:0007669"/>
    <property type="project" value="UniProtKB-SubCell"/>
</dbReference>
<dbReference type="GO" id="GO:0016151">
    <property type="term" value="F:nickel cation binding"/>
    <property type="evidence" value="ECO:0007669"/>
    <property type="project" value="UniProtKB-UniRule"/>
</dbReference>
<dbReference type="GO" id="GO:0051082">
    <property type="term" value="F:unfolded protein binding"/>
    <property type="evidence" value="ECO:0007669"/>
    <property type="project" value="UniProtKB-UniRule"/>
</dbReference>
<dbReference type="GO" id="GO:0006457">
    <property type="term" value="P:protein folding"/>
    <property type="evidence" value="ECO:0007669"/>
    <property type="project" value="InterPro"/>
</dbReference>
<dbReference type="GO" id="GO:0065003">
    <property type="term" value="P:protein-containing complex assembly"/>
    <property type="evidence" value="ECO:0007669"/>
    <property type="project" value="InterPro"/>
</dbReference>
<dbReference type="GO" id="GO:0019627">
    <property type="term" value="P:urea metabolic process"/>
    <property type="evidence" value="ECO:0007669"/>
    <property type="project" value="InterPro"/>
</dbReference>
<dbReference type="CDD" id="cd00571">
    <property type="entry name" value="UreE"/>
    <property type="match status" value="1"/>
</dbReference>
<dbReference type="Gene3D" id="2.60.260.20">
    <property type="entry name" value="Urease metallochaperone UreE, N-terminal domain"/>
    <property type="match status" value="1"/>
</dbReference>
<dbReference type="Gene3D" id="3.30.70.790">
    <property type="entry name" value="UreE, C-terminal domain"/>
    <property type="match status" value="1"/>
</dbReference>
<dbReference type="HAMAP" id="MF_00822">
    <property type="entry name" value="UreE"/>
    <property type="match status" value="1"/>
</dbReference>
<dbReference type="InterPro" id="IPR012406">
    <property type="entry name" value="UreE"/>
</dbReference>
<dbReference type="InterPro" id="IPR007864">
    <property type="entry name" value="UreE_C_dom"/>
</dbReference>
<dbReference type="InterPro" id="IPR004029">
    <property type="entry name" value="UreE_N"/>
</dbReference>
<dbReference type="InterPro" id="IPR036118">
    <property type="entry name" value="UreE_N_sf"/>
</dbReference>
<dbReference type="NCBIfam" id="NF009751">
    <property type="entry name" value="PRK13261.1-1"/>
    <property type="match status" value="1"/>
</dbReference>
<dbReference type="NCBIfam" id="NF009753">
    <property type="entry name" value="PRK13261.1-5"/>
    <property type="match status" value="1"/>
</dbReference>
<dbReference type="Pfam" id="PF05194">
    <property type="entry name" value="UreE_C"/>
    <property type="match status" value="1"/>
</dbReference>
<dbReference type="Pfam" id="PF02814">
    <property type="entry name" value="UreE_N"/>
    <property type="match status" value="1"/>
</dbReference>
<dbReference type="PIRSF" id="PIRSF036402">
    <property type="entry name" value="Ureas_acces_UreE"/>
    <property type="match status" value="1"/>
</dbReference>
<dbReference type="SMART" id="SM00988">
    <property type="entry name" value="UreE_N"/>
    <property type="match status" value="1"/>
</dbReference>
<dbReference type="SUPFAM" id="SSF69737">
    <property type="entry name" value="Urease metallochaperone UreE, C-terminal domain"/>
    <property type="match status" value="1"/>
</dbReference>
<dbReference type="SUPFAM" id="SSF69287">
    <property type="entry name" value="Urease metallochaperone UreE, N-terminal domain"/>
    <property type="match status" value="1"/>
</dbReference>
<accession>A6VD00</accession>
<organism>
    <name type="scientific">Pseudomonas paraeruginosa (strain DSM 24068 / PA7)</name>
    <name type="common">Pseudomonas aeruginosa (strain PA7)</name>
    <dbReference type="NCBI Taxonomy" id="381754"/>
    <lineage>
        <taxon>Bacteria</taxon>
        <taxon>Pseudomonadati</taxon>
        <taxon>Pseudomonadota</taxon>
        <taxon>Gammaproteobacteria</taxon>
        <taxon>Pseudomonadales</taxon>
        <taxon>Pseudomonadaceae</taxon>
        <taxon>Pseudomonas</taxon>
        <taxon>Pseudomonas paraeruginosa</taxon>
    </lineage>
</organism>
<proteinExistence type="inferred from homology"/>